<sequence length="366" mass="40535">MSSNFLNPVTTQTWANGRHLVRCVKVIQETWDVRTFCFMADQPILFFFKPGQFVTLELEIDGEPVMRSYTISSSPSVPYSFSITIKRVPGGRVSNWLHDNLKEGQELPVHGPVGLFNAIDFPADKVLFLSGGVGITPVMSMARWFFDTNANVDMVFVHSARSPKDIIYHRELEHMASRIDNFSLHIICERHGLGEAWAGYRGYLNLRMLELIAPDFLEREIFCCGPTPYMSAVKHLLQGHGYDMSRYHEEAFGPTPPEVRADVRELAAEAAEAPEVPVADQHQVEFTATGKSIRVSPGETVHAAAAKLGLHIPKACGMGICGTCKVMKTAGEVEMEHNGGITDEDVAEGYILSCCSVPKGDVVIDY</sequence>
<evidence type="ECO:0000250" key="1">
    <source>
        <dbReference type="UniProtKB" id="Q1QYU6"/>
    </source>
</evidence>
<evidence type="ECO:0000255" key="2">
    <source>
        <dbReference type="PROSITE-ProRule" id="PRU00465"/>
    </source>
</evidence>
<evidence type="ECO:0000255" key="3">
    <source>
        <dbReference type="PROSITE-ProRule" id="PRU00716"/>
    </source>
</evidence>
<evidence type="ECO:0000269" key="4">
    <source>
    </source>
</evidence>
<evidence type="ECO:0000303" key="5">
    <source>
    </source>
</evidence>
<evidence type="ECO:0000305" key="6"/>
<evidence type="ECO:0000305" key="7">
    <source>
    </source>
</evidence>
<evidence type="ECO:0000312" key="8">
    <source>
        <dbReference type="EMBL" id="ABJ14795.1"/>
    </source>
</evidence>
<dbReference type="EC" id="1.14.13.251" evidence="1"/>
<dbReference type="EMBL" id="CP000438">
    <property type="protein sequence ID" value="ABJ14795.1"/>
    <property type="molecule type" value="Genomic_DNA"/>
</dbReference>
<dbReference type="RefSeq" id="WP_003096769.1">
    <property type="nucleotide sequence ID" value="NZ_CP034244.1"/>
</dbReference>
<dbReference type="SMR" id="A0A0H2ZJB2"/>
<dbReference type="GeneID" id="77223947"/>
<dbReference type="KEGG" id="pau:PA14_71420"/>
<dbReference type="HOGENOM" id="CLU_003827_14_3_6"/>
<dbReference type="BioCyc" id="PAER208963:G1G74-6011-MONOMER"/>
<dbReference type="Proteomes" id="UP000000653">
    <property type="component" value="Chromosome"/>
</dbReference>
<dbReference type="GO" id="GO:0051537">
    <property type="term" value="F:2 iron, 2 sulfur cluster binding"/>
    <property type="evidence" value="ECO:0007669"/>
    <property type="project" value="UniProtKB-KW"/>
</dbReference>
<dbReference type="GO" id="GO:0046872">
    <property type="term" value="F:metal ion binding"/>
    <property type="evidence" value="ECO:0007669"/>
    <property type="project" value="UniProtKB-KW"/>
</dbReference>
<dbReference type="GO" id="GO:0004497">
    <property type="term" value="F:monooxygenase activity"/>
    <property type="evidence" value="ECO:0007669"/>
    <property type="project" value="UniProtKB-KW"/>
</dbReference>
<dbReference type="CDD" id="cd00207">
    <property type="entry name" value="fer2"/>
    <property type="match status" value="1"/>
</dbReference>
<dbReference type="CDD" id="cd06215">
    <property type="entry name" value="FNR_iron_sulfur_binding_1"/>
    <property type="match status" value="1"/>
</dbReference>
<dbReference type="FunFam" id="3.10.20.30:FF:000041">
    <property type="entry name" value="Glycine-betaine demethylase subunit GbcB"/>
    <property type="match status" value="1"/>
</dbReference>
<dbReference type="FunFam" id="3.40.50.80:FF:000056">
    <property type="entry name" value="Probable ferredoxin"/>
    <property type="match status" value="1"/>
</dbReference>
<dbReference type="Gene3D" id="3.10.20.30">
    <property type="match status" value="1"/>
</dbReference>
<dbReference type="Gene3D" id="3.40.50.80">
    <property type="entry name" value="Nucleotide-binding domain of ferredoxin-NADP reductase (FNR) module"/>
    <property type="match status" value="1"/>
</dbReference>
<dbReference type="Gene3D" id="2.40.30.10">
    <property type="entry name" value="Translation factors"/>
    <property type="match status" value="1"/>
</dbReference>
<dbReference type="InterPro" id="IPR036010">
    <property type="entry name" value="2Fe-2S_ferredoxin-like_sf"/>
</dbReference>
<dbReference type="InterPro" id="IPR001041">
    <property type="entry name" value="2Fe-2S_ferredoxin-type"/>
</dbReference>
<dbReference type="InterPro" id="IPR006058">
    <property type="entry name" value="2Fe2S_fd_BS"/>
</dbReference>
<dbReference type="InterPro" id="IPR012675">
    <property type="entry name" value="Beta-grasp_dom_sf"/>
</dbReference>
<dbReference type="InterPro" id="IPR008333">
    <property type="entry name" value="Cbr1-like_FAD-bd_dom"/>
</dbReference>
<dbReference type="InterPro" id="IPR017927">
    <property type="entry name" value="FAD-bd_FR_type"/>
</dbReference>
<dbReference type="InterPro" id="IPR001709">
    <property type="entry name" value="Flavoprot_Pyr_Nucl_cyt_Rdtase"/>
</dbReference>
<dbReference type="InterPro" id="IPR039261">
    <property type="entry name" value="FNR_nucleotide-bd"/>
</dbReference>
<dbReference type="InterPro" id="IPR050415">
    <property type="entry name" value="MRET"/>
</dbReference>
<dbReference type="InterPro" id="IPR001433">
    <property type="entry name" value="OxRdtase_FAD/NAD-bd"/>
</dbReference>
<dbReference type="InterPro" id="IPR017938">
    <property type="entry name" value="Riboflavin_synthase-like_b-brl"/>
</dbReference>
<dbReference type="PANTHER" id="PTHR47354">
    <property type="entry name" value="NADH OXIDOREDUCTASE HCR"/>
    <property type="match status" value="1"/>
</dbReference>
<dbReference type="PANTHER" id="PTHR47354:SF6">
    <property type="entry name" value="NADH OXIDOREDUCTASE HCR"/>
    <property type="match status" value="1"/>
</dbReference>
<dbReference type="Pfam" id="PF00970">
    <property type="entry name" value="FAD_binding_6"/>
    <property type="match status" value="1"/>
</dbReference>
<dbReference type="Pfam" id="PF00111">
    <property type="entry name" value="Fer2"/>
    <property type="match status" value="1"/>
</dbReference>
<dbReference type="Pfam" id="PF00175">
    <property type="entry name" value="NAD_binding_1"/>
    <property type="match status" value="1"/>
</dbReference>
<dbReference type="PRINTS" id="PR00406">
    <property type="entry name" value="CYTB5RDTASE"/>
</dbReference>
<dbReference type="PRINTS" id="PR00371">
    <property type="entry name" value="FPNCR"/>
</dbReference>
<dbReference type="SUPFAM" id="SSF54292">
    <property type="entry name" value="2Fe-2S ferredoxin-like"/>
    <property type="match status" value="1"/>
</dbReference>
<dbReference type="SUPFAM" id="SSF52343">
    <property type="entry name" value="Ferredoxin reductase-like, C-terminal NADP-linked domain"/>
    <property type="match status" value="1"/>
</dbReference>
<dbReference type="SUPFAM" id="SSF63380">
    <property type="entry name" value="Riboflavin synthase domain-like"/>
    <property type="match status" value="1"/>
</dbReference>
<dbReference type="PROSITE" id="PS00197">
    <property type="entry name" value="2FE2S_FER_1"/>
    <property type="match status" value="1"/>
</dbReference>
<dbReference type="PROSITE" id="PS51085">
    <property type="entry name" value="2FE2S_FER_2"/>
    <property type="match status" value="1"/>
</dbReference>
<dbReference type="PROSITE" id="PS51384">
    <property type="entry name" value="FAD_FR"/>
    <property type="match status" value="1"/>
</dbReference>
<name>GBMOR_PSEAB</name>
<reference key="1">
    <citation type="journal article" date="2006" name="Genome Biol.">
        <title>Genomic analysis reveals that Pseudomonas aeruginosa virulence is combinatorial.</title>
        <authorList>
            <person name="Lee D.G."/>
            <person name="Urbach J.M."/>
            <person name="Wu G."/>
            <person name="Liberati N.T."/>
            <person name="Feinbaum R.L."/>
            <person name="Miyata S."/>
            <person name="Diggins L.T."/>
            <person name="He J."/>
            <person name="Saucier M."/>
            <person name="Deziel E."/>
            <person name="Friedman L."/>
            <person name="Li L."/>
            <person name="Grills G."/>
            <person name="Montgomery K."/>
            <person name="Kucherlapati R."/>
            <person name="Rahme L.G."/>
            <person name="Ausubel F.M."/>
        </authorList>
    </citation>
    <scope>NUCLEOTIDE SEQUENCE [LARGE SCALE GENOMIC DNA]</scope>
    <source>
        <strain>UCBPP-PA14</strain>
    </source>
</reference>
<reference key="2">
    <citation type="journal article" date="2008" name="J. Bacteriol.">
        <title>Identification of two gene clusters and a transcriptional regulator required for Pseudomonas aeruginosa glycine betaine catabolism.</title>
        <authorList>
            <person name="Wargo M.J."/>
            <person name="Szwergold B.S."/>
            <person name="Hogan D.A."/>
        </authorList>
    </citation>
    <scope>FUNCTION</scope>
    <scope>INDUCTION</scope>
    <scope>DISRUPTION PHENOTYPE</scope>
    <source>
        <strain>UCBPP-PA14</strain>
    </source>
</reference>
<protein>
    <recommendedName>
        <fullName evidence="6">Glycine betaine monooxygenase reductase subunit</fullName>
        <ecNumber evidence="1">1.14.13.251</ecNumber>
    </recommendedName>
    <alternativeName>
        <fullName evidence="5">Glycine betaine catabolism B</fullName>
    </alternativeName>
</protein>
<keyword id="KW-0001">2Fe-2S</keyword>
<keyword id="KW-0274">FAD</keyword>
<keyword id="KW-0285">Flavoprotein</keyword>
<keyword id="KW-0408">Iron</keyword>
<keyword id="KW-0411">Iron-sulfur</keyword>
<keyword id="KW-0479">Metal-binding</keyword>
<keyword id="KW-0503">Monooxygenase</keyword>
<keyword id="KW-0560">Oxidoreductase</keyword>
<comment type="function">
    <text evidence="4 6">Involved in degradation of glycine betaine (PubMed:17951379). Part of a Rieske-type oxygenase system that catalyzes the conversion of glycine betaine (GB) to dimethylglycine (DMG) (PubMed:17951379). This subunit is the ferredoxin reductase component of the system (Probable).</text>
</comment>
<comment type="catalytic activity">
    <reaction evidence="1">
        <text>glycine betaine + NADH + O2 + H(+) = N,N-dimethylglycine + formaldehyde + NAD(+) + H2O</text>
        <dbReference type="Rhea" id="RHEA:45700"/>
        <dbReference type="ChEBI" id="CHEBI:15377"/>
        <dbReference type="ChEBI" id="CHEBI:15378"/>
        <dbReference type="ChEBI" id="CHEBI:15379"/>
        <dbReference type="ChEBI" id="CHEBI:16842"/>
        <dbReference type="ChEBI" id="CHEBI:17750"/>
        <dbReference type="ChEBI" id="CHEBI:57540"/>
        <dbReference type="ChEBI" id="CHEBI:57945"/>
        <dbReference type="ChEBI" id="CHEBI:58251"/>
        <dbReference type="EC" id="1.14.13.251"/>
    </reaction>
    <physiologicalReaction direction="left-to-right" evidence="1">
        <dbReference type="Rhea" id="RHEA:45701"/>
    </physiologicalReaction>
</comment>
<comment type="cofactor">
    <cofactor evidence="1">
        <name>FAD</name>
        <dbReference type="ChEBI" id="CHEBI:57692"/>
    </cofactor>
    <text evidence="1">Binds 1 FAD per subunit.</text>
</comment>
<comment type="cofactor">
    <cofactor evidence="1">
        <name>[2Fe-2S] cluster</name>
        <dbReference type="ChEBI" id="CHEBI:190135"/>
    </cofactor>
    <text evidence="1">Binds 1 2Fe-2S cluster per subunit.</text>
</comment>
<comment type="subunit">
    <text evidence="7">The system is composed of an oxygenase subunit (GbcA) and a reductase subunit (GbcB).</text>
</comment>
<comment type="induction">
    <text evidence="4">Transcriptionally regulated by GbdR (PubMed:17951379). Expression is induced by growth on glycine betaine or dimethylglycine, but not by growth on pyruvate or sarcosine (PubMed:17951379).</text>
</comment>
<comment type="disruption phenotype">
    <text evidence="4">Mutant is unable to grow on choline or glycine betaine as a sole carbon source, but it can grow on dimethylglycine (PubMed:17951379). The gbcA-gbcB double mutant cannot grow on choline or glycine betaine as a sole carbon or nitrogen source, but it can grow in minimal medium with glucose or pyruvate as the sole carbon source (PubMed:17951379).</text>
</comment>
<comment type="similarity">
    <text evidence="6">In the N-terminal section; belongs to the FAD-binding oxidoreductase type 6 family.</text>
</comment>
<organism>
    <name type="scientific">Pseudomonas aeruginosa (strain UCBPP-PA14)</name>
    <dbReference type="NCBI Taxonomy" id="208963"/>
    <lineage>
        <taxon>Bacteria</taxon>
        <taxon>Pseudomonadati</taxon>
        <taxon>Pseudomonadota</taxon>
        <taxon>Gammaproteobacteria</taxon>
        <taxon>Pseudomonadales</taxon>
        <taxon>Pseudomonadaceae</taxon>
        <taxon>Pseudomonas</taxon>
    </lineage>
</organism>
<proteinExistence type="evidence at transcript level"/>
<accession>A0A0H2ZJB2</accession>
<feature type="chain" id="PRO_0000459096" description="Glycine betaine monooxygenase reductase subunit">
    <location>
        <begin position="1"/>
        <end position="366"/>
    </location>
</feature>
<feature type="domain" description="FAD-binding FR-type" evidence="3">
    <location>
        <begin position="16"/>
        <end position="119"/>
    </location>
</feature>
<feature type="domain" description="2Fe-2S ferredoxin-type" evidence="2">
    <location>
        <begin position="282"/>
        <end position="366"/>
    </location>
</feature>
<feature type="binding site" evidence="2">
    <location>
        <position position="316"/>
    </location>
    <ligand>
        <name>[2Fe-2S] cluster</name>
        <dbReference type="ChEBI" id="CHEBI:190135"/>
    </ligand>
</feature>
<feature type="binding site" evidence="2">
    <location>
        <position position="321"/>
    </location>
    <ligand>
        <name>[2Fe-2S] cluster</name>
        <dbReference type="ChEBI" id="CHEBI:190135"/>
    </ligand>
</feature>
<feature type="binding site" evidence="2">
    <location>
        <position position="324"/>
    </location>
    <ligand>
        <name>[2Fe-2S] cluster</name>
        <dbReference type="ChEBI" id="CHEBI:190135"/>
    </ligand>
</feature>
<feature type="binding site" evidence="2">
    <location>
        <position position="354"/>
    </location>
    <ligand>
        <name>[2Fe-2S] cluster</name>
        <dbReference type="ChEBI" id="CHEBI:190135"/>
    </ligand>
</feature>
<gene>
    <name evidence="5" type="primary">gbcB</name>
    <name evidence="8" type="ordered locus">PA14_71420</name>
</gene>